<dbReference type="EC" id="1.4.3.-" evidence="3"/>
<dbReference type="EMBL" id="HE610390">
    <property type="protein sequence ID" value="CCE46164.1"/>
    <property type="molecule type" value="mRNA"/>
</dbReference>
<dbReference type="SMR" id="H2A0M3"/>
<dbReference type="GO" id="GO:0005576">
    <property type="term" value="C:extracellular region"/>
    <property type="evidence" value="ECO:0007669"/>
    <property type="project" value="UniProtKB-SubCell"/>
</dbReference>
<dbReference type="GO" id="GO:0005886">
    <property type="term" value="C:plasma membrane"/>
    <property type="evidence" value="ECO:0007669"/>
    <property type="project" value="TreeGrafter"/>
</dbReference>
<dbReference type="GO" id="GO:0005507">
    <property type="term" value="F:copper ion binding"/>
    <property type="evidence" value="ECO:0007669"/>
    <property type="project" value="InterPro"/>
</dbReference>
<dbReference type="GO" id="GO:0008131">
    <property type="term" value="F:primary methylamine oxidase activity"/>
    <property type="evidence" value="ECO:0007669"/>
    <property type="project" value="InterPro"/>
</dbReference>
<dbReference type="GO" id="GO:0048038">
    <property type="term" value="F:quinone binding"/>
    <property type="evidence" value="ECO:0007669"/>
    <property type="project" value="InterPro"/>
</dbReference>
<dbReference type="GO" id="GO:0009308">
    <property type="term" value="P:amine metabolic process"/>
    <property type="evidence" value="ECO:0007669"/>
    <property type="project" value="InterPro"/>
</dbReference>
<dbReference type="Gene3D" id="3.10.450.40">
    <property type="match status" value="2"/>
</dbReference>
<dbReference type="Gene3D" id="2.70.98.20">
    <property type="entry name" value="Copper amine oxidase, catalytic domain"/>
    <property type="match status" value="1"/>
</dbReference>
<dbReference type="InterPro" id="IPR049947">
    <property type="entry name" value="Cu_Am_Ox_Cu-bd"/>
</dbReference>
<dbReference type="InterPro" id="IPR049948">
    <property type="entry name" value="Cu_Am_ox_TPQ-bd"/>
</dbReference>
<dbReference type="InterPro" id="IPR000269">
    <property type="entry name" value="Cu_amine_oxidase"/>
</dbReference>
<dbReference type="InterPro" id="IPR015798">
    <property type="entry name" value="Cu_amine_oxidase_C"/>
</dbReference>
<dbReference type="InterPro" id="IPR036460">
    <property type="entry name" value="Cu_amine_oxidase_C_sf"/>
</dbReference>
<dbReference type="InterPro" id="IPR016182">
    <property type="entry name" value="Cu_amine_oxidase_N-reg"/>
</dbReference>
<dbReference type="InterPro" id="IPR015800">
    <property type="entry name" value="Cu_amine_oxidase_N2"/>
</dbReference>
<dbReference type="PANTHER" id="PTHR10638:SF20">
    <property type="entry name" value="AMINE OXIDASE"/>
    <property type="match status" value="1"/>
</dbReference>
<dbReference type="PANTHER" id="PTHR10638">
    <property type="entry name" value="COPPER AMINE OXIDASE"/>
    <property type="match status" value="1"/>
</dbReference>
<dbReference type="Pfam" id="PF01179">
    <property type="entry name" value="Cu_amine_oxid"/>
    <property type="match status" value="1"/>
</dbReference>
<dbReference type="Pfam" id="PF02727">
    <property type="entry name" value="Cu_amine_oxidN2"/>
    <property type="match status" value="1"/>
</dbReference>
<dbReference type="PRINTS" id="PR00766">
    <property type="entry name" value="CUDAOXIDASE"/>
</dbReference>
<dbReference type="SUPFAM" id="SSF49998">
    <property type="entry name" value="Amine oxidase catalytic domain"/>
    <property type="match status" value="1"/>
</dbReference>
<dbReference type="SUPFAM" id="SSF54416">
    <property type="entry name" value="Amine oxidase N-terminal region"/>
    <property type="match status" value="2"/>
</dbReference>
<dbReference type="PROSITE" id="PS01164">
    <property type="entry name" value="COPPER_AMINE_OXID_1"/>
    <property type="match status" value="1"/>
</dbReference>
<dbReference type="PROSITE" id="PS01165">
    <property type="entry name" value="COPPER_AMINE_OXID_2"/>
    <property type="match status" value="1"/>
</dbReference>
<accession>H2A0M3</accession>
<proteinExistence type="evidence at protein level"/>
<name>AMO_PINMG</name>
<protein>
    <recommendedName>
        <fullName>Putative amine oxidase [copper-containing]</fullName>
        <ecNumber evidence="3">1.4.3.-</ecNumber>
    </recommendedName>
</protein>
<organism>
    <name type="scientific">Margaritifera margaritifera</name>
    <name type="common">Freshwater pearl mussel</name>
    <dbReference type="NCBI Taxonomy" id="102329"/>
    <lineage>
        <taxon>Eukaryota</taxon>
        <taxon>Metazoa</taxon>
        <taxon>Spiralia</taxon>
        <taxon>Lophotrochozoa</taxon>
        <taxon>Mollusca</taxon>
        <taxon>Bivalvia</taxon>
        <taxon>Autobranchia</taxon>
        <taxon>Pteriomorphia</taxon>
        <taxon>Pterioida</taxon>
        <taxon>Pterioidea</taxon>
        <taxon>Pteriidae</taxon>
        <taxon>Pinctada</taxon>
    </lineage>
</organism>
<evidence type="ECO:0000250" key="1">
    <source>
        <dbReference type="UniProtKB" id="P12807"/>
    </source>
</evidence>
<evidence type="ECO:0000250" key="2">
    <source>
        <dbReference type="UniProtKB" id="P19801"/>
    </source>
</evidence>
<evidence type="ECO:0000250" key="3">
    <source>
        <dbReference type="UniProtKB" id="P46883"/>
    </source>
</evidence>
<evidence type="ECO:0000250" key="4">
    <source>
        <dbReference type="UniProtKB" id="Q43077"/>
    </source>
</evidence>
<evidence type="ECO:0000255" key="5"/>
<evidence type="ECO:0000269" key="6">
    <source>
    </source>
</evidence>
<evidence type="ECO:0000305" key="7"/>
<comment type="cofactor">
    <cofactor evidence="2">
        <name>Cu cation</name>
        <dbReference type="ChEBI" id="CHEBI:23378"/>
    </cofactor>
    <text evidence="2">Binds 1 copper ion per subunit.</text>
</comment>
<comment type="cofactor">
    <cofactor evidence="2">
        <name>Ca(2+)</name>
        <dbReference type="ChEBI" id="CHEBI:29108"/>
    </cofactor>
    <text evidence="2">Binds 2 calcium ions per subunit.</text>
</comment>
<comment type="cofactor">
    <cofactor evidence="2">
        <name>L-topaquinone</name>
        <dbReference type="ChEBI" id="CHEBI:79027"/>
    </cofactor>
    <text evidence="2">Contains 1 topaquinone per subunit.</text>
</comment>
<comment type="cofactor">
    <cofactor evidence="4">
        <name>Mn(2+)</name>
        <dbReference type="ChEBI" id="CHEBI:29035"/>
    </cofactor>
    <text evidence="4">Binds 1 Mn(2+) ion per subunit.</text>
</comment>
<comment type="subunit">
    <text evidence="3">Homodimer.</text>
</comment>
<comment type="subcellular location">
    <subcellularLocation>
        <location evidence="6">Secreted</location>
    </subcellularLocation>
</comment>
<comment type="tissue specificity">
    <text evidence="6">Prismatic layer of shell (at protein level). Expressed primarily in the mantle with highest level in the mantle edge and lower level in the mantle pallium.</text>
</comment>
<comment type="PTM">
    <text evidence="2">Topaquinone (TPQ) is generated by copper-dependent autoxidation of a specific tyrosyl residue.</text>
</comment>
<comment type="similarity">
    <text evidence="5">Belongs to the copper/topaquinone oxidase family.</text>
</comment>
<reference evidence="7" key="1">
    <citation type="journal article" date="2010" name="BMC Genomics">
        <title>Transcriptome and proteome analysis of Pinctada margaritifera calcifying mantle and shell: focus on biomineralization.</title>
        <authorList>
            <person name="Joubert C."/>
            <person name="Piquemal D."/>
            <person name="Marie B."/>
            <person name="Manchon L."/>
            <person name="Pierrat F."/>
            <person name="Zanella-Cleon I."/>
            <person name="Cochennec-Laureau N."/>
            <person name="Gueguen Y."/>
            <person name="Montagnani C."/>
        </authorList>
    </citation>
    <scope>NUCLEOTIDE SEQUENCE [MRNA]</scope>
    <scope>IDENTIFICATION</scope>
    <source>
        <tissue>Mantle</tissue>
    </source>
</reference>
<reference key="2">
    <citation type="journal article" date="2012" name="Proc. Natl. Acad. Sci. U.S.A.">
        <title>Different secretory repertoires control the biomineralization processes of prism and nacre deposition of the pearl oyster shell.</title>
        <authorList>
            <person name="Marie B."/>
            <person name="Joubert C."/>
            <person name="Tayale A."/>
            <person name="Zanella-Cleon I."/>
            <person name="Belliard C."/>
            <person name="Piquemal D."/>
            <person name="Cochennec-Laureau N."/>
            <person name="Marin F."/>
            <person name="Gueguen Y."/>
            <person name="Montagnani C."/>
        </authorList>
    </citation>
    <scope>PROTEIN SEQUENCE OF 67-76; 80-87; 196-202; 286-293; 303-315; 427-443; 449-467; 493-506; 544-553; 578-585; 603-612 AND 761-772</scope>
    <scope>SUBCELLULAR LOCATION</scope>
    <scope>TISSUE SPECIFICITY</scope>
    <source>
        <tissue>Shell</tissue>
    </source>
</reference>
<sequence>MSLPKTANGMDKLKLCYLLLFYLGSSSLTEVSGAQTCEIDSVLCTSDLSEPDDPPIFHDLTTKEIKSVQTYLYHQRDLRLLRPGLAKINTSFIQGMELYLPNKKDVIHYLQSKVPTPKPPRAAVVTIFRGDCDPAVVEEYIVFPLPWPTQHRLHRKVPYYLRPFNDVEFATISDFLTKQVDGVLRQFLEESFGGRLINCGNRCLNFQFASPVGPSVSNEPGARKSWYWLHQLVEYSALHPVDFAVLMKIVGCVYTIEKVYFNNMYFNSLQEVALHYRNPSFPRLRIPYPVDSKQLFSKMERRGILFPEKPVSPPRQVEPEGKRYSVKYQEVKYMNWKFNFRLSPGLGPRLHNIRYHDRLIVYELALQDIVVFYSGAEPPHQYANFFDSSYMIGMNLQGMVPGVDCPTGATFIDSHILTESSLKPAKLINAFCVFEQNTGDFLRRHISKTSPDGPFYEGVPSIVLVLRAITTIANYDYTIDFIFHHNGVLQTKVVPTGYILPSLYTKQNENKYGFRLNNKLIGNLHHHLFNFKVDIDINGQHNRYETLDIVLDKTSHPVSKKPYDVWYQNKIKHNLRKTEMEALFKYDFDKPMHHIFYNNNLKSPEGNNMAYRLVNRGMSKSLLPECSGNEGTGAWMRHQIAVTKRKETELTSSSVYSAFGTKNPVVNFRNFYADNENIVDEDLVAWVTMGTYHIPHTEDLPVTHTPGLDLSFFLSPFNYFPEDPAMGSRDSVRIEAVDKNNLKRGIKIDKQTFPEKMTCKAPIGNYFEYILKRPNVIFDIQ</sequence>
<feature type="signal peptide" evidence="5">
    <location>
        <begin position="1"/>
        <end position="34"/>
    </location>
</feature>
<feature type="chain" id="PRO_0000418018" description="Putative amine oxidase [copper-containing]" evidence="5">
    <location>
        <begin position="35"/>
        <end position="781"/>
    </location>
</feature>
<feature type="active site" description="Proton acceptor" evidence="2">
    <location>
        <position position="387"/>
    </location>
</feature>
<feature type="active site" description="Schiff-base intermediate with substrate; via topaquinone" evidence="2">
    <location>
        <position position="475"/>
    </location>
</feature>
<feature type="binding site" evidence="1">
    <location>
        <begin position="385"/>
        <end position="395"/>
    </location>
    <ligand>
        <name>substrate</name>
    </ligand>
</feature>
<feature type="binding site" evidence="3">
    <location>
        <begin position="472"/>
        <end position="477"/>
    </location>
    <ligand>
        <name>substrate</name>
    </ligand>
</feature>
<feature type="binding site" evidence="1">
    <location>
        <position position="525"/>
    </location>
    <ligand>
        <name>Cu cation</name>
        <dbReference type="ChEBI" id="CHEBI:23378"/>
    </ligand>
</feature>
<feature type="binding site" evidence="1">
    <location>
        <position position="527"/>
    </location>
    <ligand>
        <name>Cu cation</name>
        <dbReference type="ChEBI" id="CHEBI:23378"/>
    </ligand>
</feature>
<feature type="binding site" evidence="2">
    <location>
        <position position="534"/>
    </location>
    <ligand>
        <name>Ca(2+)</name>
        <dbReference type="ChEBI" id="CHEBI:29108"/>
        <label>1</label>
    </ligand>
</feature>
<feature type="binding site" evidence="4">
    <location>
        <position position="534"/>
    </location>
    <ligand>
        <name>Mn(2+)</name>
        <dbReference type="ChEBI" id="CHEBI:29035"/>
    </ligand>
</feature>
<feature type="binding site" evidence="2">
    <location>
        <position position="536"/>
    </location>
    <ligand>
        <name>Ca(2+)</name>
        <dbReference type="ChEBI" id="CHEBI:29108"/>
        <label>1</label>
    </ligand>
</feature>
<feature type="binding site" evidence="4">
    <location>
        <position position="536"/>
    </location>
    <ligand>
        <name>Mn(2+)</name>
        <dbReference type="ChEBI" id="CHEBI:29035"/>
    </ligand>
</feature>
<feature type="binding site" evidence="2">
    <location>
        <position position="579"/>
    </location>
    <ligand>
        <name>Ca(2+)</name>
        <dbReference type="ChEBI" id="CHEBI:29108"/>
        <label>2</label>
    </ligand>
</feature>
<feature type="binding site" evidence="2">
    <location>
        <position position="671"/>
    </location>
    <ligand>
        <name>Ca(2+)</name>
        <dbReference type="ChEBI" id="CHEBI:29108"/>
        <label>2</label>
    </ligand>
</feature>
<feature type="binding site" evidence="3">
    <location>
        <position position="674"/>
    </location>
    <ligand>
        <name>Ca(2+)</name>
        <dbReference type="ChEBI" id="CHEBI:29108"/>
        <label>2</label>
    </ligand>
</feature>
<feature type="binding site" evidence="2">
    <location>
        <position position="676"/>
    </location>
    <ligand>
        <name>Ca(2+)</name>
        <dbReference type="ChEBI" id="CHEBI:29108"/>
        <label>2</label>
    </ligand>
</feature>
<feature type="binding site" evidence="2">
    <location>
        <position position="682"/>
    </location>
    <ligand>
        <name>Ca(2+)</name>
        <dbReference type="ChEBI" id="CHEBI:29108"/>
        <label>1</label>
    </ligand>
</feature>
<feature type="binding site" evidence="4">
    <location>
        <position position="682"/>
    </location>
    <ligand>
        <name>Mn(2+)</name>
        <dbReference type="ChEBI" id="CHEBI:29035"/>
    </ligand>
</feature>
<feature type="binding site" evidence="2">
    <location>
        <position position="683"/>
    </location>
    <ligand>
        <name>Ca(2+)</name>
        <dbReference type="ChEBI" id="CHEBI:29108"/>
        <label>1</label>
    </ligand>
</feature>
<feature type="binding site" evidence="1">
    <location>
        <position position="693"/>
    </location>
    <ligand>
        <name>Cu cation</name>
        <dbReference type="ChEBI" id="CHEBI:23378"/>
    </ligand>
</feature>
<feature type="modified residue" description="2',4',5'-topaquinone" evidence="2">
    <location>
        <position position="475"/>
    </location>
</feature>
<feature type="disulfide bond" evidence="2">
    <location>
        <begin position="199"/>
        <end position="203"/>
    </location>
</feature>
<feature type="disulfide bond" evidence="2">
    <location>
        <begin position="405"/>
        <end position="432"/>
    </location>
</feature>
<keyword id="KW-0106">Calcium</keyword>
<keyword id="KW-0186">Copper</keyword>
<keyword id="KW-0903">Direct protein sequencing</keyword>
<keyword id="KW-1015">Disulfide bond</keyword>
<keyword id="KW-0464">Manganese</keyword>
<keyword id="KW-0479">Metal-binding</keyword>
<keyword id="KW-0560">Oxidoreductase</keyword>
<keyword id="KW-0964">Secreted</keyword>
<keyword id="KW-0732">Signal</keyword>
<keyword id="KW-0801">TPQ</keyword>